<dbReference type="EMBL" id="L22465">
    <property type="protein sequence ID" value="AAA21916.1"/>
    <property type="molecule type" value="Genomic_DNA"/>
</dbReference>
<dbReference type="PIR" id="I39516">
    <property type="entry name" value="I39516"/>
</dbReference>
<dbReference type="SMR" id="P41117"/>
<dbReference type="STRING" id="1278311.GCA_000428705_01111"/>
<dbReference type="GO" id="GO:0022627">
    <property type="term" value="C:cytosolic small ribosomal subunit"/>
    <property type="evidence" value="ECO:0007669"/>
    <property type="project" value="TreeGrafter"/>
</dbReference>
<dbReference type="GO" id="GO:0003729">
    <property type="term" value="F:mRNA binding"/>
    <property type="evidence" value="ECO:0007669"/>
    <property type="project" value="UniProtKB-UniRule"/>
</dbReference>
<dbReference type="GO" id="GO:0019843">
    <property type="term" value="F:rRNA binding"/>
    <property type="evidence" value="ECO:0007669"/>
    <property type="project" value="UniProtKB-UniRule"/>
</dbReference>
<dbReference type="GO" id="GO:0003735">
    <property type="term" value="F:structural constituent of ribosome"/>
    <property type="evidence" value="ECO:0007669"/>
    <property type="project" value="InterPro"/>
</dbReference>
<dbReference type="GO" id="GO:0006412">
    <property type="term" value="P:translation"/>
    <property type="evidence" value="ECO:0007669"/>
    <property type="project" value="UniProtKB-UniRule"/>
</dbReference>
<dbReference type="CDD" id="cd02412">
    <property type="entry name" value="KH-II_30S_S3"/>
    <property type="match status" value="1"/>
</dbReference>
<dbReference type="FunFam" id="3.30.300.20:FF:000001">
    <property type="entry name" value="30S ribosomal protein S3"/>
    <property type="match status" value="1"/>
</dbReference>
<dbReference type="Gene3D" id="3.30.300.20">
    <property type="match status" value="1"/>
</dbReference>
<dbReference type="Gene3D" id="3.30.1140.32">
    <property type="entry name" value="Ribosomal protein S3, C-terminal domain"/>
    <property type="match status" value="1"/>
</dbReference>
<dbReference type="HAMAP" id="MF_01309_B">
    <property type="entry name" value="Ribosomal_uS3_B"/>
    <property type="match status" value="1"/>
</dbReference>
<dbReference type="InterPro" id="IPR004087">
    <property type="entry name" value="KH_dom"/>
</dbReference>
<dbReference type="InterPro" id="IPR015946">
    <property type="entry name" value="KH_dom-like_a/b"/>
</dbReference>
<dbReference type="InterPro" id="IPR004044">
    <property type="entry name" value="KH_dom_type_2"/>
</dbReference>
<dbReference type="InterPro" id="IPR009019">
    <property type="entry name" value="KH_sf_prok-type"/>
</dbReference>
<dbReference type="InterPro" id="IPR036419">
    <property type="entry name" value="Ribosomal_S3_C_sf"/>
</dbReference>
<dbReference type="InterPro" id="IPR005704">
    <property type="entry name" value="Ribosomal_uS3_bac-typ"/>
</dbReference>
<dbReference type="InterPro" id="IPR001351">
    <property type="entry name" value="Ribosomal_uS3_C"/>
</dbReference>
<dbReference type="InterPro" id="IPR018280">
    <property type="entry name" value="Ribosomal_uS3_CS"/>
</dbReference>
<dbReference type="NCBIfam" id="TIGR01009">
    <property type="entry name" value="rpsC_bact"/>
    <property type="match status" value="1"/>
</dbReference>
<dbReference type="PANTHER" id="PTHR11760">
    <property type="entry name" value="30S/40S RIBOSOMAL PROTEIN S3"/>
    <property type="match status" value="1"/>
</dbReference>
<dbReference type="PANTHER" id="PTHR11760:SF19">
    <property type="entry name" value="SMALL RIBOSOMAL SUBUNIT PROTEIN US3C"/>
    <property type="match status" value="1"/>
</dbReference>
<dbReference type="Pfam" id="PF07650">
    <property type="entry name" value="KH_2"/>
    <property type="match status" value="1"/>
</dbReference>
<dbReference type="Pfam" id="PF00189">
    <property type="entry name" value="Ribosomal_S3_C"/>
    <property type="match status" value="1"/>
</dbReference>
<dbReference type="SMART" id="SM00322">
    <property type="entry name" value="KH"/>
    <property type="match status" value="1"/>
</dbReference>
<dbReference type="SUPFAM" id="SSF54814">
    <property type="entry name" value="Prokaryotic type KH domain (KH-domain type II)"/>
    <property type="match status" value="1"/>
</dbReference>
<dbReference type="SUPFAM" id="SSF54821">
    <property type="entry name" value="Ribosomal protein S3 C-terminal domain"/>
    <property type="match status" value="1"/>
</dbReference>
<dbReference type="PROSITE" id="PS50823">
    <property type="entry name" value="KH_TYPE_2"/>
    <property type="match status" value="1"/>
</dbReference>
<dbReference type="PROSITE" id="PS00548">
    <property type="entry name" value="RIBOSOMAL_S3"/>
    <property type="match status" value="1"/>
</dbReference>
<organism>
    <name type="scientific">Haploplasma axanthum</name>
    <name type="common">Acholeplasma axanthum</name>
    <dbReference type="NCBI Taxonomy" id="29552"/>
    <lineage>
        <taxon>Bacteria</taxon>
        <taxon>Bacillati</taxon>
        <taxon>Mycoplasmatota</taxon>
        <taxon>Mollicutes</taxon>
        <taxon>Acholeplasmatales</taxon>
        <taxon>Acholeplasmataceae</taxon>
        <taxon>Haploplasma</taxon>
    </lineage>
</organism>
<reference key="1">
    <citation type="journal article" date="1994" name="Int. J. Syst. Bacteriol.">
        <title>Phylogenetic relationships among members of the class Mollicutes deduced from rps3 gene sequences.</title>
        <authorList>
            <person name="Toth K.T."/>
            <person name="Harrison N."/>
            <person name="Sears B.B."/>
        </authorList>
    </citation>
    <scope>NUCLEOTIDE SEQUENCE [GENOMIC DNA]</scope>
    <source>
        <strain>ATCC 25176 / NCTC 10138 / S-743</strain>
    </source>
</reference>
<name>RS3_HAPAX</name>
<accession>P41117</accession>
<sequence>MGQKVNPIGFRVGVIRDWDSKWYADKKIVPALVKEDAVIRKFLNKKYNNAAVSHVEIERLKELKVKKRVKITLHSGKPGVVIGREAATMKETIASLEKLTKKEIVFNVVEVRKPEVVATLVAQSMAEQLENRASFRKSTKNCYAKSIKVRAKGIKTLSQRLGGREMARTEGYSEGQVPLHTLRADVEYATAEAQTTYGILGIKVWIYHGEILPGQSHEELRKERQSSASSNHGGGKRRPSRKGPRRSQEDAATEGGN</sequence>
<proteinExistence type="inferred from homology"/>
<gene>
    <name evidence="1" type="primary">rpsC</name>
    <name evidence="1" type="synonym">rps3</name>
</gene>
<evidence type="ECO:0000255" key="1">
    <source>
        <dbReference type="HAMAP-Rule" id="MF_01309"/>
    </source>
</evidence>
<evidence type="ECO:0000256" key="2">
    <source>
        <dbReference type="SAM" id="MobiDB-lite"/>
    </source>
</evidence>
<evidence type="ECO:0000305" key="3"/>
<feature type="chain" id="PRO_0000130052" description="Small ribosomal subunit protein uS3">
    <location>
        <begin position="1"/>
        <end position="257"/>
    </location>
</feature>
<feature type="domain" description="KH type-2" evidence="1">
    <location>
        <begin position="39"/>
        <end position="112"/>
    </location>
</feature>
<feature type="region of interest" description="Disordered" evidence="2">
    <location>
        <begin position="217"/>
        <end position="257"/>
    </location>
</feature>
<feature type="compositionally biased region" description="Basic residues" evidence="2">
    <location>
        <begin position="234"/>
        <end position="245"/>
    </location>
</feature>
<comment type="function">
    <text evidence="1">Binds the lower part of the 30S subunit head. Binds mRNA in the 70S ribosome, positioning it for translation.</text>
</comment>
<comment type="subunit">
    <text evidence="1">Part of the 30S ribosomal subunit. Forms a tight complex with proteins S10 and S14.</text>
</comment>
<comment type="similarity">
    <text evidence="1">Belongs to the universal ribosomal protein uS3 family.</text>
</comment>
<keyword id="KW-0687">Ribonucleoprotein</keyword>
<keyword id="KW-0689">Ribosomal protein</keyword>
<keyword id="KW-0694">RNA-binding</keyword>
<keyword id="KW-0699">rRNA-binding</keyword>
<protein>
    <recommendedName>
        <fullName evidence="1">Small ribosomal subunit protein uS3</fullName>
    </recommendedName>
    <alternativeName>
        <fullName evidence="3">30S ribosomal protein S3</fullName>
    </alternativeName>
</protein>